<evidence type="ECO:0000255" key="1">
    <source>
        <dbReference type="HAMAP-Rule" id="MF_00303"/>
    </source>
</evidence>
<evidence type="ECO:0000256" key="2">
    <source>
        <dbReference type="SAM" id="MobiDB-lite"/>
    </source>
</evidence>
<accession>B2IT89</accession>
<sequence length="480" mass="53775">MKVTQEKLPASQIGLEIEITPEITKQTYEQVIKNLASTANIPGFRRGKVPRPILLQRLGTTRIKAAALEELIQDGIEQAVKQEAIPAIGQPQLRSSFEDLINNYEPGKPLTILAAVDVEPEVNLVQYTDLLFQAEEVKYDPEQVDSSLEKERQELATLIPVEGRSAQIGDIAVVDFKGSFAKAEGEDETAELEPIPGAEATDFQVELQEDKFIPGFISGIVGMNPEETREIAAQFPDPYANEDLAGKAATFIVTLKELKEKELPEINDDFAQEISDFETLEELRASLVERYQKEADDKTKTNKQEALLTELLKHVEVDLPLTLVEQEVDAMLTQTAMRLSQQGLDVRKLFTQDIIPQLRERSRTEAIERIKRSLSLREVGKRESIEVTPEEIGVRVKELLEQYPEEKEVDEDRLRSIVENELLTEKTIDWLLEHSSVELVPEGSLSPAEETEAAESDADADVSQTEQENSEPSTTEVTEG</sequence>
<proteinExistence type="inferred from homology"/>
<reference key="1">
    <citation type="journal article" date="2013" name="Plant Physiol.">
        <title>A Nostoc punctiforme Sugar Transporter Necessary to Establish a Cyanobacterium-Plant Symbiosis.</title>
        <authorList>
            <person name="Ekman M."/>
            <person name="Picossi S."/>
            <person name="Campbell E.L."/>
            <person name="Meeks J.C."/>
            <person name="Flores E."/>
        </authorList>
    </citation>
    <scope>NUCLEOTIDE SEQUENCE [LARGE SCALE GENOMIC DNA]</scope>
    <source>
        <strain>ATCC 29133 / PCC 73102</strain>
    </source>
</reference>
<protein>
    <recommendedName>
        <fullName evidence="1">Trigger factor</fullName>
        <shortName evidence="1">TF</shortName>
        <ecNumber evidence="1">5.2.1.8</ecNumber>
    </recommendedName>
    <alternativeName>
        <fullName evidence="1">PPIase</fullName>
    </alternativeName>
</protein>
<organism>
    <name type="scientific">Nostoc punctiforme (strain ATCC 29133 / PCC 73102)</name>
    <dbReference type="NCBI Taxonomy" id="63737"/>
    <lineage>
        <taxon>Bacteria</taxon>
        <taxon>Bacillati</taxon>
        <taxon>Cyanobacteriota</taxon>
        <taxon>Cyanophyceae</taxon>
        <taxon>Nostocales</taxon>
        <taxon>Nostocaceae</taxon>
        <taxon>Nostoc</taxon>
    </lineage>
</organism>
<feature type="chain" id="PRO_1000115560" description="Trigger factor">
    <location>
        <begin position="1"/>
        <end position="480"/>
    </location>
</feature>
<feature type="domain" description="PPIase FKBP-type" evidence="1">
    <location>
        <begin position="169"/>
        <end position="264"/>
    </location>
</feature>
<feature type="region of interest" description="Disordered" evidence="2">
    <location>
        <begin position="441"/>
        <end position="480"/>
    </location>
</feature>
<feature type="compositionally biased region" description="Acidic residues" evidence="2">
    <location>
        <begin position="449"/>
        <end position="460"/>
    </location>
</feature>
<feature type="compositionally biased region" description="Polar residues" evidence="2">
    <location>
        <begin position="462"/>
        <end position="480"/>
    </location>
</feature>
<comment type="function">
    <text evidence="1">Involved in protein export. Acts as a chaperone by maintaining the newly synthesized protein in an open conformation. Functions as a peptidyl-prolyl cis-trans isomerase.</text>
</comment>
<comment type="catalytic activity">
    <reaction evidence="1">
        <text>[protein]-peptidylproline (omega=180) = [protein]-peptidylproline (omega=0)</text>
        <dbReference type="Rhea" id="RHEA:16237"/>
        <dbReference type="Rhea" id="RHEA-COMP:10747"/>
        <dbReference type="Rhea" id="RHEA-COMP:10748"/>
        <dbReference type="ChEBI" id="CHEBI:83833"/>
        <dbReference type="ChEBI" id="CHEBI:83834"/>
        <dbReference type="EC" id="5.2.1.8"/>
    </reaction>
</comment>
<comment type="subcellular location">
    <subcellularLocation>
        <location>Cytoplasm</location>
    </subcellularLocation>
    <text evidence="1">About half TF is bound to the ribosome near the polypeptide exit tunnel while the other half is free in the cytoplasm.</text>
</comment>
<comment type="domain">
    <text evidence="1">Consists of 3 domains; the N-terminus binds the ribosome, the middle domain has PPIase activity, while the C-terminus has intrinsic chaperone activity on its own.</text>
</comment>
<comment type="similarity">
    <text evidence="1">Belongs to the FKBP-type PPIase family. Tig subfamily.</text>
</comment>
<name>TIG_NOSP7</name>
<keyword id="KW-0131">Cell cycle</keyword>
<keyword id="KW-0132">Cell division</keyword>
<keyword id="KW-0143">Chaperone</keyword>
<keyword id="KW-0963">Cytoplasm</keyword>
<keyword id="KW-0413">Isomerase</keyword>
<keyword id="KW-1185">Reference proteome</keyword>
<keyword id="KW-0697">Rotamase</keyword>
<gene>
    <name evidence="1" type="primary">tig</name>
    <name type="ordered locus">Npun_F0849</name>
</gene>
<dbReference type="EC" id="5.2.1.8" evidence="1"/>
<dbReference type="EMBL" id="CP001037">
    <property type="protein sequence ID" value="ACC79587.1"/>
    <property type="molecule type" value="Genomic_DNA"/>
</dbReference>
<dbReference type="RefSeq" id="WP_012407609.1">
    <property type="nucleotide sequence ID" value="NC_010628.1"/>
</dbReference>
<dbReference type="SMR" id="B2IT89"/>
<dbReference type="STRING" id="63737.Npun_F0849"/>
<dbReference type="EnsemblBacteria" id="ACC79587">
    <property type="protein sequence ID" value="ACC79587"/>
    <property type="gene ID" value="Npun_F0849"/>
</dbReference>
<dbReference type="KEGG" id="npu:Npun_F0849"/>
<dbReference type="eggNOG" id="COG0544">
    <property type="taxonomic scope" value="Bacteria"/>
</dbReference>
<dbReference type="HOGENOM" id="CLU_033058_3_1_3"/>
<dbReference type="OrthoDB" id="9767721at2"/>
<dbReference type="PhylomeDB" id="B2IT89"/>
<dbReference type="Proteomes" id="UP000001191">
    <property type="component" value="Chromosome"/>
</dbReference>
<dbReference type="GO" id="GO:0005737">
    <property type="term" value="C:cytoplasm"/>
    <property type="evidence" value="ECO:0007669"/>
    <property type="project" value="UniProtKB-SubCell"/>
</dbReference>
<dbReference type="GO" id="GO:0003755">
    <property type="term" value="F:peptidyl-prolyl cis-trans isomerase activity"/>
    <property type="evidence" value="ECO:0007669"/>
    <property type="project" value="UniProtKB-UniRule"/>
</dbReference>
<dbReference type="GO" id="GO:0044183">
    <property type="term" value="F:protein folding chaperone"/>
    <property type="evidence" value="ECO:0007669"/>
    <property type="project" value="TreeGrafter"/>
</dbReference>
<dbReference type="GO" id="GO:0043022">
    <property type="term" value="F:ribosome binding"/>
    <property type="evidence" value="ECO:0007669"/>
    <property type="project" value="TreeGrafter"/>
</dbReference>
<dbReference type="GO" id="GO:0051083">
    <property type="term" value="P:'de novo' cotranslational protein folding"/>
    <property type="evidence" value="ECO:0007669"/>
    <property type="project" value="TreeGrafter"/>
</dbReference>
<dbReference type="GO" id="GO:0051301">
    <property type="term" value="P:cell division"/>
    <property type="evidence" value="ECO:0007669"/>
    <property type="project" value="UniProtKB-KW"/>
</dbReference>
<dbReference type="GO" id="GO:0061077">
    <property type="term" value="P:chaperone-mediated protein folding"/>
    <property type="evidence" value="ECO:0007669"/>
    <property type="project" value="TreeGrafter"/>
</dbReference>
<dbReference type="GO" id="GO:0015031">
    <property type="term" value="P:protein transport"/>
    <property type="evidence" value="ECO:0007669"/>
    <property type="project" value="UniProtKB-UniRule"/>
</dbReference>
<dbReference type="GO" id="GO:0043335">
    <property type="term" value="P:protein unfolding"/>
    <property type="evidence" value="ECO:0007669"/>
    <property type="project" value="TreeGrafter"/>
</dbReference>
<dbReference type="FunFam" id="3.10.50.40:FF:000001">
    <property type="entry name" value="Trigger factor"/>
    <property type="match status" value="1"/>
</dbReference>
<dbReference type="FunFam" id="3.30.70.1050:FF:000004">
    <property type="entry name" value="Trigger factor"/>
    <property type="match status" value="1"/>
</dbReference>
<dbReference type="Gene3D" id="3.10.50.40">
    <property type="match status" value="1"/>
</dbReference>
<dbReference type="Gene3D" id="3.30.70.1050">
    <property type="entry name" value="Trigger factor ribosome-binding domain"/>
    <property type="match status" value="1"/>
</dbReference>
<dbReference type="Gene3D" id="1.10.3120.10">
    <property type="entry name" value="Trigger factor, C-terminal domain"/>
    <property type="match status" value="1"/>
</dbReference>
<dbReference type="HAMAP" id="MF_00303">
    <property type="entry name" value="Trigger_factor_Tig"/>
    <property type="match status" value="1"/>
</dbReference>
<dbReference type="InterPro" id="IPR046357">
    <property type="entry name" value="PPIase_dom_sf"/>
</dbReference>
<dbReference type="InterPro" id="IPR001179">
    <property type="entry name" value="PPIase_FKBP_dom"/>
</dbReference>
<dbReference type="InterPro" id="IPR005215">
    <property type="entry name" value="Trig_fac"/>
</dbReference>
<dbReference type="InterPro" id="IPR008880">
    <property type="entry name" value="Trigger_fac_C"/>
</dbReference>
<dbReference type="InterPro" id="IPR037041">
    <property type="entry name" value="Trigger_fac_C_sf"/>
</dbReference>
<dbReference type="InterPro" id="IPR008881">
    <property type="entry name" value="Trigger_fac_ribosome-bd_bac"/>
</dbReference>
<dbReference type="InterPro" id="IPR036611">
    <property type="entry name" value="Trigger_fac_ribosome-bd_sf"/>
</dbReference>
<dbReference type="InterPro" id="IPR027304">
    <property type="entry name" value="Trigger_fact/SurA_dom_sf"/>
</dbReference>
<dbReference type="NCBIfam" id="TIGR00115">
    <property type="entry name" value="tig"/>
    <property type="match status" value="1"/>
</dbReference>
<dbReference type="PANTHER" id="PTHR30560">
    <property type="entry name" value="TRIGGER FACTOR CHAPERONE AND PEPTIDYL-PROLYL CIS/TRANS ISOMERASE"/>
    <property type="match status" value="1"/>
</dbReference>
<dbReference type="PANTHER" id="PTHR30560:SF3">
    <property type="entry name" value="TRIGGER FACTOR-LIKE PROTEIN TIG, CHLOROPLASTIC"/>
    <property type="match status" value="1"/>
</dbReference>
<dbReference type="Pfam" id="PF00254">
    <property type="entry name" value="FKBP_C"/>
    <property type="match status" value="1"/>
</dbReference>
<dbReference type="Pfam" id="PF05698">
    <property type="entry name" value="Trigger_C"/>
    <property type="match status" value="1"/>
</dbReference>
<dbReference type="Pfam" id="PF05697">
    <property type="entry name" value="Trigger_N"/>
    <property type="match status" value="1"/>
</dbReference>
<dbReference type="PIRSF" id="PIRSF003095">
    <property type="entry name" value="Trigger_factor"/>
    <property type="match status" value="1"/>
</dbReference>
<dbReference type="SUPFAM" id="SSF54534">
    <property type="entry name" value="FKBP-like"/>
    <property type="match status" value="1"/>
</dbReference>
<dbReference type="SUPFAM" id="SSF109998">
    <property type="entry name" value="Triger factor/SurA peptide-binding domain-like"/>
    <property type="match status" value="1"/>
</dbReference>
<dbReference type="SUPFAM" id="SSF102735">
    <property type="entry name" value="Trigger factor ribosome-binding domain"/>
    <property type="match status" value="1"/>
</dbReference>